<keyword id="KW-0285">Flavoprotein</keyword>
<keyword id="KW-0288">FMN</keyword>
<keyword id="KW-0560">Oxidoreductase</keyword>
<keyword id="KW-0665">Pyrimidine biosynthesis</keyword>
<keyword id="KW-1185">Reference proteome</keyword>
<evidence type="ECO:0000250" key="1"/>
<evidence type="ECO:0000269" key="2">
    <source>
    </source>
</evidence>
<evidence type="ECO:0000303" key="3">
    <source>
    </source>
</evidence>
<evidence type="ECO:0000305" key="4"/>
<evidence type="ECO:0000305" key="5">
    <source>
    </source>
</evidence>
<proteinExistence type="evidence at protein level"/>
<dbReference type="EC" id="1.3.-.-" evidence="2"/>
<dbReference type="EMBL" id="X02917">
    <property type="protein sequence ID" value="CAA26674.1"/>
    <property type="status" value="ALT_FRAME"/>
    <property type="molecule type" value="Genomic_DNA"/>
</dbReference>
<dbReference type="EMBL" id="AAFI02000014">
    <property type="protein sequence ID" value="EAL69246.1"/>
    <property type="molecule type" value="Genomic_DNA"/>
</dbReference>
<dbReference type="PIR" id="A23559">
    <property type="entry name" value="A23559"/>
</dbReference>
<dbReference type="RefSeq" id="XP_643195.1">
    <property type="nucleotide sequence ID" value="XM_638103.1"/>
</dbReference>
<dbReference type="SMR" id="P07670"/>
<dbReference type="STRING" id="44689.P07670"/>
<dbReference type="PaxDb" id="44689-DDB0185217"/>
<dbReference type="EnsemblProtists" id="EAL69246">
    <property type="protein sequence ID" value="EAL69246"/>
    <property type="gene ID" value="DDB_G0276331"/>
</dbReference>
<dbReference type="GeneID" id="8620469"/>
<dbReference type="KEGG" id="ddi:DDB_G0276331"/>
<dbReference type="dictyBase" id="DDB_G0276331">
    <property type="gene designation" value="pyr4"/>
</dbReference>
<dbReference type="VEuPathDB" id="AmoebaDB:DDB_G0276331"/>
<dbReference type="eggNOG" id="ENOG502S3NB">
    <property type="taxonomic scope" value="Eukaryota"/>
</dbReference>
<dbReference type="HOGENOM" id="CLU_785030_0_0_1"/>
<dbReference type="InParanoid" id="P07670"/>
<dbReference type="OMA" id="CPNEGHN"/>
<dbReference type="PhylomeDB" id="P07670"/>
<dbReference type="UniPathway" id="UPA00070"/>
<dbReference type="PRO" id="PR:P07670"/>
<dbReference type="Proteomes" id="UP000002195">
    <property type="component" value="Chromosome 2"/>
</dbReference>
<dbReference type="GO" id="GO:0005737">
    <property type="term" value="C:cytoplasm"/>
    <property type="evidence" value="ECO:0000318"/>
    <property type="project" value="GO_Central"/>
</dbReference>
<dbReference type="GO" id="GO:0004152">
    <property type="term" value="F:dihydroorotate dehydrogenase activity"/>
    <property type="evidence" value="ECO:0000316"/>
    <property type="project" value="dictyBase"/>
</dbReference>
<dbReference type="GO" id="GO:0006207">
    <property type="term" value="P:'de novo' pyrimidine nucleobase biosynthetic process"/>
    <property type="evidence" value="ECO:0000250"/>
    <property type="project" value="dictyBase"/>
</dbReference>
<dbReference type="GO" id="GO:0044205">
    <property type="term" value="P:'de novo' UMP biosynthetic process"/>
    <property type="evidence" value="ECO:0007669"/>
    <property type="project" value="UniProtKB-UniPathway"/>
</dbReference>
<dbReference type="CDD" id="cd02810">
    <property type="entry name" value="DHOD_DHPD_FMN"/>
    <property type="match status" value="1"/>
</dbReference>
<dbReference type="Gene3D" id="3.20.20.70">
    <property type="entry name" value="Aldolase class I"/>
    <property type="match status" value="1"/>
</dbReference>
<dbReference type="InterPro" id="IPR013785">
    <property type="entry name" value="Aldolase_TIM"/>
</dbReference>
<dbReference type="InterPro" id="IPR050074">
    <property type="entry name" value="DHO_dehydrogenase"/>
</dbReference>
<dbReference type="InterPro" id="IPR005720">
    <property type="entry name" value="Dihydroorotate_DH_cat"/>
</dbReference>
<dbReference type="PANTHER" id="PTHR48109:SF1">
    <property type="entry name" value="DIHYDROOROTATE DEHYDROGENASE (FUMARATE)"/>
    <property type="match status" value="1"/>
</dbReference>
<dbReference type="PANTHER" id="PTHR48109">
    <property type="entry name" value="DIHYDROOROTATE DEHYDROGENASE (QUINONE), MITOCHONDRIAL-RELATED"/>
    <property type="match status" value="1"/>
</dbReference>
<dbReference type="Pfam" id="PF01180">
    <property type="entry name" value="DHO_dh"/>
    <property type="match status" value="1"/>
</dbReference>
<dbReference type="SUPFAM" id="SSF51395">
    <property type="entry name" value="FMN-linked oxidoreductases"/>
    <property type="match status" value="1"/>
</dbReference>
<comment type="function">
    <text evidence="2 3">Catalyzes the conversion of dihydroorotate to orotate (PubMed:2996629). Participates in the pyrimidine biosynthetic pathway (PubMed:2996629).</text>
</comment>
<comment type="catalytic activity">
    <reaction evidence="2">
        <text>(S)-dihydroorotate + A = orotate + AH2</text>
        <dbReference type="Rhea" id="RHEA:18073"/>
        <dbReference type="ChEBI" id="CHEBI:13193"/>
        <dbReference type="ChEBI" id="CHEBI:17499"/>
        <dbReference type="ChEBI" id="CHEBI:30839"/>
        <dbReference type="ChEBI" id="CHEBI:30864"/>
    </reaction>
    <physiologicalReaction direction="left-to-right" evidence="5">
        <dbReference type="Rhea" id="RHEA:18074"/>
    </physiologicalReaction>
</comment>
<comment type="cofactor">
    <cofactor evidence="1">
        <name>FMN</name>
        <dbReference type="ChEBI" id="CHEBI:58210"/>
    </cofactor>
    <text evidence="1">Binds 1 FMN per subunit.</text>
</comment>
<comment type="pathway">
    <text evidence="5">Pyrimidine metabolism; UMP biosynthesis via de novo pathway.</text>
</comment>
<comment type="similarity">
    <text evidence="4">Belongs to the dihydroorotate dehydrogenase family.</text>
</comment>
<comment type="sequence caution" evidence="4">
    <conflict type="frameshift">
        <sequence resource="EMBL-CDS" id="CAA26674"/>
    </conflict>
</comment>
<gene>
    <name type="primary">pyr4</name>
    <name type="ORF">DDB_G0276331</name>
</gene>
<reference key="1">
    <citation type="journal article" date="1985" name="Biochimie">
        <title>Sequence analysis of a Dictyostelium discoideum gene coding for an active dihydroorotate dehydrogenase in yeast.</title>
        <authorList>
            <person name="Jacquet M."/>
            <person name="Kalekine M."/>
            <person name="Boy-Marcotte E."/>
        </authorList>
    </citation>
    <scope>NUCLEOTIDE SEQUENCE [GENOMIC DNA]</scope>
    <scope>FUNCTION</scope>
    <scope>CATALYTIC ACTIVITY</scope>
    <scope>PATHWAY</scope>
</reference>
<reference key="2">
    <citation type="journal article" date="2002" name="Nature">
        <title>Sequence and analysis of chromosome 2 of Dictyostelium discoideum.</title>
        <authorList>
            <person name="Gloeckner G."/>
            <person name="Eichinger L."/>
            <person name="Szafranski K."/>
            <person name="Pachebat J.A."/>
            <person name="Bankier A.T."/>
            <person name="Dear P.H."/>
            <person name="Lehmann R."/>
            <person name="Baumgart C."/>
            <person name="Parra G."/>
            <person name="Abril J.F."/>
            <person name="Guigo R."/>
            <person name="Kumpf K."/>
            <person name="Tunggal B."/>
            <person name="Cox E.C."/>
            <person name="Quail M.A."/>
            <person name="Platzer M."/>
            <person name="Rosenthal A."/>
            <person name="Noegel A.A."/>
        </authorList>
    </citation>
    <scope>NUCLEOTIDE SEQUENCE [LARGE SCALE GENOMIC DNA]</scope>
    <source>
        <strain>AX4</strain>
    </source>
</reference>
<reference key="3">
    <citation type="journal article" date="2005" name="Nature">
        <title>The genome of the social amoeba Dictyostelium discoideum.</title>
        <authorList>
            <person name="Eichinger L."/>
            <person name="Pachebat J.A."/>
            <person name="Gloeckner G."/>
            <person name="Rajandream M.A."/>
            <person name="Sucgang R."/>
            <person name="Berriman M."/>
            <person name="Song J."/>
            <person name="Olsen R."/>
            <person name="Szafranski K."/>
            <person name="Xu Q."/>
            <person name="Tunggal B."/>
            <person name="Kummerfeld S."/>
            <person name="Madera M."/>
            <person name="Konfortov B.A."/>
            <person name="Rivero F."/>
            <person name="Bankier A.T."/>
            <person name="Lehmann R."/>
            <person name="Hamlin N."/>
            <person name="Davies R."/>
            <person name="Gaudet P."/>
            <person name="Fey P."/>
            <person name="Pilcher K."/>
            <person name="Chen G."/>
            <person name="Saunders D."/>
            <person name="Sodergren E.J."/>
            <person name="Davis P."/>
            <person name="Kerhornou A."/>
            <person name="Nie X."/>
            <person name="Hall N."/>
            <person name="Anjard C."/>
            <person name="Hemphill L."/>
            <person name="Bason N."/>
            <person name="Farbrother P."/>
            <person name="Desany B."/>
            <person name="Just E."/>
            <person name="Morio T."/>
            <person name="Rost R."/>
            <person name="Churcher C.M."/>
            <person name="Cooper J."/>
            <person name="Haydock S."/>
            <person name="van Driessche N."/>
            <person name="Cronin A."/>
            <person name="Goodhead I."/>
            <person name="Muzny D.M."/>
            <person name="Mourier T."/>
            <person name="Pain A."/>
            <person name="Lu M."/>
            <person name="Harper D."/>
            <person name="Lindsay R."/>
            <person name="Hauser H."/>
            <person name="James K.D."/>
            <person name="Quiles M."/>
            <person name="Madan Babu M."/>
            <person name="Saito T."/>
            <person name="Buchrieser C."/>
            <person name="Wardroper A."/>
            <person name="Felder M."/>
            <person name="Thangavelu M."/>
            <person name="Johnson D."/>
            <person name="Knights A."/>
            <person name="Loulseged H."/>
            <person name="Mungall K.L."/>
            <person name="Oliver K."/>
            <person name="Price C."/>
            <person name="Quail M.A."/>
            <person name="Urushihara H."/>
            <person name="Hernandez J."/>
            <person name="Rabbinowitsch E."/>
            <person name="Steffen D."/>
            <person name="Sanders M."/>
            <person name="Ma J."/>
            <person name="Kohara Y."/>
            <person name="Sharp S."/>
            <person name="Simmonds M.N."/>
            <person name="Spiegler S."/>
            <person name="Tivey A."/>
            <person name="Sugano S."/>
            <person name="White B."/>
            <person name="Walker D."/>
            <person name="Woodward J.R."/>
            <person name="Winckler T."/>
            <person name="Tanaka Y."/>
            <person name="Shaulsky G."/>
            <person name="Schleicher M."/>
            <person name="Weinstock G.M."/>
            <person name="Rosenthal A."/>
            <person name="Cox E.C."/>
            <person name="Chisholm R.L."/>
            <person name="Gibbs R.A."/>
            <person name="Loomis W.F."/>
            <person name="Platzer M."/>
            <person name="Kay R.R."/>
            <person name="Williams J.G."/>
            <person name="Dear P.H."/>
            <person name="Noegel A.A."/>
            <person name="Barrell B.G."/>
            <person name="Kuspa A."/>
        </authorList>
    </citation>
    <scope>NUCLEOTIDE SEQUENCE [LARGE SCALE GENOMIC DNA]</scope>
    <source>
        <strain>AX4</strain>
    </source>
</reference>
<protein>
    <recommendedName>
        <fullName>Dihydroorotate dehydrogenase</fullName>
        <shortName>DHOD</shortName>
        <shortName>DHODase</shortName>
        <shortName>DHOdehase</shortName>
        <ecNumber evidence="2">1.3.-.-</ecNumber>
    </recommendedName>
    <alternativeName>
        <fullName>Dihydroorotate oxidase</fullName>
    </alternativeName>
</protein>
<accession>P07670</accession>
<accession>Q551R6</accession>
<accession>Q86AD1</accession>
<sequence>MEWPINKPIYDINKSWEDNLENGPFIEGYKKVDRNDNKDPSKYIDFLGQKLASPIGVPAGPLLNSQWVKFALEAGFDLPTYKTIRSHEHFGHPVPNVMYLDLESEDKQFTKSDSGSTLHATQTIPTTMDQLAITNSFGMPSMGKEYLYKDIALAHSYLGSGQSMIVSITGTASSAHDFLQDFVDTVRIACDAGAKMVEVNYSCPNVVTGEGQIYHNPDAVYEISSTLVKELSSKNIPLIIKVGVMDDLEKMERLFQQAERAGVAAIAGINTLSMKVTDKITGEPSLGASRLTSGVCGAPIRSAALDWVSTASSIIKKQNSKLKLLGCGGIVKPEHFDDFLNSGADIAMSATGLMWDPYIAMKWHNNNKNN</sequence>
<feature type="chain" id="PRO_0000148498" description="Dihydroorotate dehydrogenase">
    <location>
        <begin position="1"/>
        <end position="370"/>
    </location>
</feature>
<feature type="active site" description="Nucleophile" evidence="1">
    <location>
        <position position="203"/>
    </location>
</feature>
<feature type="binding site" evidence="1">
    <location>
        <begin position="82"/>
        <end position="83"/>
    </location>
    <ligand>
        <name>FMN</name>
        <dbReference type="ChEBI" id="CHEBI:58210"/>
    </ligand>
</feature>
<feature type="binding site" evidence="1">
    <location>
        <position position="82"/>
    </location>
    <ligand>
        <name>substrate</name>
    </ligand>
</feature>
<feature type="binding site" evidence="1">
    <location>
        <begin position="135"/>
        <end position="139"/>
    </location>
    <ligand>
        <name>substrate</name>
    </ligand>
</feature>
<feature type="binding site" evidence="1">
    <location>
        <position position="200"/>
    </location>
    <ligand>
        <name>FMN</name>
        <dbReference type="ChEBI" id="CHEBI:58210"/>
    </ligand>
</feature>
<feature type="binding site" evidence="1">
    <location>
        <position position="200"/>
    </location>
    <ligand>
        <name>substrate</name>
    </ligand>
</feature>
<feature type="binding site" evidence="1">
    <location>
        <position position="241"/>
    </location>
    <ligand>
        <name>FMN</name>
        <dbReference type="ChEBI" id="CHEBI:58210"/>
    </ligand>
</feature>
<feature type="binding site" evidence="1">
    <location>
        <position position="269"/>
    </location>
    <ligand>
        <name>FMN</name>
        <dbReference type="ChEBI" id="CHEBI:58210"/>
    </ligand>
</feature>
<feature type="binding site" evidence="1">
    <location>
        <begin position="270"/>
        <end position="271"/>
    </location>
    <ligand>
        <name>substrate</name>
    </ligand>
</feature>
<feature type="binding site" evidence="1">
    <location>
        <position position="297"/>
    </location>
    <ligand>
        <name>FMN</name>
        <dbReference type="ChEBI" id="CHEBI:58210"/>
    </ligand>
</feature>
<feature type="binding site" evidence="1">
    <location>
        <begin position="328"/>
        <end position="329"/>
    </location>
    <ligand>
        <name>FMN</name>
        <dbReference type="ChEBI" id="CHEBI:58210"/>
    </ligand>
</feature>
<feature type="binding site" evidence="1">
    <location>
        <begin position="350"/>
        <end position="351"/>
    </location>
    <ligand>
        <name>FMN</name>
        <dbReference type="ChEBI" id="CHEBI:58210"/>
    </ligand>
</feature>
<feature type="sequence conflict" description="In Ref. 1; CAA26674." evidence="4" ref="1">
    <original>G</original>
    <variation>E</variation>
    <location>
        <position position="60"/>
    </location>
</feature>
<feature type="sequence conflict" description="In Ref. 1; CAA26674." evidence="4" ref="1">
    <original>E</original>
    <variation>V</variation>
    <location>
        <position position="73"/>
    </location>
</feature>
<feature type="sequence conflict" description="In Ref. 1; CAA26674." evidence="4" ref="1">
    <original>M</original>
    <variation>I</variation>
    <location>
        <position position="128"/>
    </location>
</feature>
<feature type="sequence conflict" description="In Ref. 1; CAA26674." evidence="4" ref="1">
    <original>DIA</original>
    <variation>GIT</variation>
    <location>
        <begin position="150"/>
        <end position="152"/>
    </location>
</feature>
<feature type="sequence conflict" description="In Ref. 1; CAA26674." evidence="4" ref="1">
    <original>RLF</original>
    <variation>GLL</variation>
    <location>
        <begin position="253"/>
        <end position="255"/>
    </location>
</feature>
<feature type="sequence conflict" description="In Ref. 1; CAA26674." evidence="4" ref="1">
    <original>A</original>
    <variation>P</variation>
    <location>
        <position position="288"/>
    </location>
</feature>
<feature type="sequence conflict" description="In Ref. 1; CAA26674." evidence="4" ref="1">
    <original>V</original>
    <variation>D</variation>
    <location>
        <position position="331"/>
    </location>
</feature>
<feature type="sequence conflict" description="In Ref. 1; CAA26674." evidence="4" ref="1">
    <original>T</original>
    <variation>I</variation>
    <location>
        <position position="351"/>
    </location>
</feature>
<organism>
    <name type="scientific">Dictyostelium discoideum</name>
    <name type="common">Social amoeba</name>
    <dbReference type="NCBI Taxonomy" id="44689"/>
    <lineage>
        <taxon>Eukaryota</taxon>
        <taxon>Amoebozoa</taxon>
        <taxon>Evosea</taxon>
        <taxon>Eumycetozoa</taxon>
        <taxon>Dictyostelia</taxon>
        <taxon>Dictyosteliales</taxon>
        <taxon>Dictyosteliaceae</taxon>
        <taxon>Dictyostelium</taxon>
    </lineage>
</organism>
<name>PYRD_DICDI</name>